<feature type="chain" id="PRO_0000075718" description="Cysteine and glycine-rich protein 1">
    <location>
        <begin position="1"/>
        <end position="193"/>
    </location>
</feature>
<feature type="domain" description="LIM zinc-binding 1" evidence="4">
    <location>
        <begin position="10"/>
        <end position="61"/>
    </location>
</feature>
<feature type="domain" description="LIM zinc-binding 2" evidence="4">
    <location>
        <begin position="119"/>
        <end position="170"/>
    </location>
</feature>
<feature type="short sequence motif" description="Nuclear localization signal" evidence="3">
    <location>
        <begin position="64"/>
        <end position="69"/>
    </location>
</feature>
<feature type="modified residue" description="Phosphoserine" evidence="5">
    <location>
        <position position="81"/>
    </location>
</feature>
<feature type="modified residue" description="N6-acetyllysine" evidence="2">
    <location>
        <position position="84"/>
    </location>
</feature>
<feature type="modified residue" description="N6-acetyllysine" evidence="1">
    <location>
        <position position="112"/>
    </location>
</feature>
<feature type="modified residue" description="N6-acetyllysine" evidence="1">
    <location>
        <position position="131"/>
    </location>
</feature>
<feature type="modified residue" description="N6-acetyllysine" evidence="2">
    <location>
        <position position="137"/>
    </location>
</feature>
<feature type="modified residue" description="N6-acetyllysine" evidence="2">
    <location>
        <position position="161"/>
    </location>
</feature>
<feature type="modified residue" description="Phosphoserine" evidence="5">
    <location>
        <position position="192"/>
    </location>
</feature>
<feature type="cross-link" description="Glycyl lysine isopeptide (Lys-Gly) (interchain with G-Cter in SUMO2)" evidence="1">
    <location>
        <position position="91"/>
    </location>
</feature>
<accession>P47875</accession>
<gene>
    <name type="primary">Csrp1</name>
    <name type="synonym">Csrp</name>
</gene>
<keyword id="KW-0007">Acetylation</keyword>
<keyword id="KW-1017">Isopeptide bond</keyword>
<keyword id="KW-0440">LIM domain</keyword>
<keyword id="KW-0479">Metal-binding</keyword>
<keyword id="KW-0539">Nucleus</keyword>
<keyword id="KW-0597">Phosphoprotein</keyword>
<keyword id="KW-1185">Reference proteome</keyword>
<keyword id="KW-0677">Repeat</keyword>
<keyword id="KW-0832">Ubl conjugation</keyword>
<keyword id="KW-0862">Zinc</keyword>
<proteinExistence type="evidence at protein level"/>
<protein>
    <recommendedName>
        <fullName>Cysteine and glycine-rich protein 1</fullName>
    </recommendedName>
    <alternativeName>
        <fullName>Cysteine-rich protein 1</fullName>
        <shortName>CRP</shortName>
        <shortName>CRP1</shortName>
    </alternativeName>
</protein>
<evidence type="ECO:0000250" key="1">
    <source>
        <dbReference type="UniProtKB" id="P21291"/>
    </source>
</evidence>
<evidence type="ECO:0000250" key="2">
    <source>
        <dbReference type="UniProtKB" id="P97315"/>
    </source>
</evidence>
<evidence type="ECO:0000255" key="3"/>
<evidence type="ECO:0000255" key="4">
    <source>
        <dbReference type="PROSITE-ProRule" id="PRU00125"/>
    </source>
</evidence>
<evidence type="ECO:0007744" key="5">
    <source>
    </source>
</evidence>
<organism>
    <name type="scientific">Rattus norvegicus</name>
    <name type="common">Rat</name>
    <dbReference type="NCBI Taxonomy" id="10116"/>
    <lineage>
        <taxon>Eukaryota</taxon>
        <taxon>Metazoa</taxon>
        <taxon>Chordata</taxon>
        <taxon>Craniata</taxon>
        <taxon>Vertebrata</taxon>
        <taxon>Euteleostomi</taxon>
        <taxon>Mammalia</taxon>
        <taxon>Eutheria</taxon>
        <taxon>Euarchontoglires</taxon>
        <taxon>Glires</taxon>
        <taxon>Rodentia</taxon>
        <taxon>Myomorpha</taxon>
        <taxon>Muroidea</taxon>
        <taxon>Muridae</taxon>
        <taxon>Murinae</taxon>
        <taxon>Rattus</taxon>
    </lineage>
</organism>
<sequence>MPNWGGGKKCGVCQKTVYFAEEVQCEGNSFHKSCFLCMVCKKNLDSTTVAVHGEEIYCKSCYGKKYGPKGYGYGQGAGTLSMDKGESLGIKHEEAPGHRPTTNPNASKFAQKIGGSERCPRCSQAVYAAEKVIGAGKSWHKSCFRCAKCGKGLESTTLADKDGEIYCKGCYAKNFGPKGFGFGQGAGALVHSE</sequence>
<reference key="1">
    <citation type="journal article" date="1994" name="Nucleic Acids Res.">
        <title>Isolation and developmental expression of a rat cDNA encoding a cysteine-rich zinc finger protein.</title>
        <authorList>
            <person name="McLaughlin C.R."/>
            <person name="Tao Q."/>
            <person name="Abood M.E."/>
        </authorList>
    </citation>
    <scope>NUCLEOTIDE SEQUENCE [MRNA]</scope>
    <source>
        <strain>Sprague-Dawley</strain>
        <tissue>Olfactory bulb</tissue>
    </source>
</reference>
<reference key="2">
    <citation type="journal article" date="2004" name="Genome Res.">
        <title>The status, quality, and expansion of the NIH full-length cDNA project: the Mammalian Gene Collection (MGC).</title>
        <authorList>
            <consortium name="The MGC Project Team"/>
        </authorList>
    </citation>
    <scope>NUCLEOTIDE SEQUENCE [LARGE SCALE MRNA]</scope>
    <source>
        <tissue>Prostate</tissue>
    </source>
</reference>
<reference key="3">
    <citation type="journal article" date="2012" name="Nat. Commun.">
        <title>Quantitative maps of protein phosphorylation sites across 14 different rat organs and tissues.</title>
        <authorList>
            <person name="Lundby A."/>
            <person name="Secher A."/>
            <person name="Lage K."/>
            <person name="Nordsborg N.B."/>
            <person name="Dmytriyev A."/>
            <person name="Lundby C."/>
            <person name="Olsen J.V."/>
        </authorList>
    </citation>
    <scope>PHOSPHORYLATION [LARGE SCALE ANALYSIS] AT SER-81 AND SER-192</scope>
    <scope>IDENTIFICATION BY MASS SPECTROMETRY [LARGE SCALE ANALYSIS]</scope>
</reference>
<dbReference type="EMBL" id="U09567">
    <property type="protein sequence ID" value="AAC52157.1"/>
    <property type="molecule type" value="mRNA"/>
</dbReference>
<dbReference type="EMBL" id="BC062407">
    <property type="protein sequence ID" value="AAH62407.1"/>
    <property type="molecule type" value="mRNA"/>
</dbReference>
<dbReference type="PIR" id="S53580">
    <property type="entry name" value="S53580"/>
</dbReference>
<dbReference type="RefSeq" id="NP_058844.1">
    <property type="nucleotide sequence ID" value="NM_017148.2"/>
</dbReference>
<dbReference type="SMR" id="P47875"/>
<dbReference type="FunCoup" id="P47875">
    <property type="interactions" value="1133"/>
</dbReference>
<dbReference type="IntAct" id="P47875">
    <property type="interactions" value="2"/>
</dbReference>
<dbReference type="STRING" id="10116.ENSRNOP00000011991"/>
<dbReference type="iPTMnet" id="P47875"/>
<dbReference type="PhosphoSitePlus" id="P47875"/>
<dbReference type="jPOST" id="P47875"/>
<dbReference type="PaxDb" id="10116-ENSRNOP00000011991"/>
<dbReference type="GeneID" id="29276"/>
<dbReference type="KEGG" id="rno:29276"/>
<dbReference type="UCSC" id="RGD:62053">
    <property type="organism name" value="rat"/>
</dbReference>
<dbReference type="AGR" id="RGD:62053"/>
<dbReference type="CTD" id="1465"/>
<dbReference type="RGD" id="62053">
    <property type="gene designation" value="Csrp1"/>
</dbReference>
<dbReference type="VEuPathDB" id="HostDB:ENSRNOG00000008937"/>
<dbReference type="eggNOG" id="KOG1700">
    <property type="taxonomic scope" value="Eukaryota"/>
</dbReference>
<dbReference type="HOGENOM" id="CLU_054591_1_0_1"/>
<dbReference type="InParanoid" id="P47875"/>
<dbReference type="OrthoDB" id="58659at9989"/>
<dbReference type="PhylomeDB" id="P47875"/>
<dbReference type="TreeFam" id="TF313758"/>
<dbReference type="PRO" id="PR:P47875"/>
<dbReference type="Proteomes" id="UP000002494">
    <property type="component" value="Chromosome 13"/>
</dbReference>
<dbReference type="Bgee" id="ENSRNOG00000008937">
    <property type="expression patterns" value="Expressed in lung and 20 other cell types or tissues"/>
</dbReference>
<dbReference type="GO" id="GO:0005737">
    <property type="term" value="C:cytoplasm"/>
    <property type="evidence" value="ECO:0000318"/>
    <property type="project" value="GO_Central"/>
</dbReference>
<dbReference type="GO" id="GO:0005634">
    <property type="term" value="C:nucleus"/>
    <property type="evidence" value="ECO:0000266"/>
    <property type="project" value="RGD"/>
</dbReference>
<dbReference type="GO" id="GO:0030018">
    <property type="term" value="C:Z disc"/>
    <property type="evidence" value="ECO:0000318"/>
    <property type="project" value="GO_Central"/>
</dbReference>
<dbReference type="GO" id="GO:0042805">
    <property type="term" value="F:actinin binding"/>
    <property type="evidence" value="ECO:0000318"/>
    <property type="project" value="GO_Central"/>
</dbReference>
<dbReference type="GO" id="GO:0046872">
    <property type="term" value="F:metal ion binding"/>
    <property type="evidence" value="ECO:0007669"/>
    <property type="project" value="UniProtKB-KW"/>
</dbReference>
<dbReference type="GO" id="GO:0008307">
    <property type="term" value="F:structural constituent of muscle"/>
    <property type="evidence" value="ECO:0000318"/>
    <property type="project" value="GO_Central"/>
</dbReference>
<dbReference type="GO" id="GO:0060537">
    <property type="term" value="P:muscle tissue development"/>
    <property type="evidence" value="ECO:0000318"/>
    <property type="project" value="GO_Central"/>
</dbReference>
<dbReference type="GO" id="GO:0007399">
    <property type="term" value="P:nervous system development"/>
    <property type="evidence" value="ECO:0000303"/>
    <property type="project" value="RGD"/>
</dbReference>
<dbReference type="GO" id="GO:0045214">
    <property type="term" value="P:sarcomere organization"/>
    <property type="evidence" value="ECO:0000318"/>
    <property type="project" value="GO_Central"/>
</dbReference>
<dbReference type="CDD" id="cd09479">
    <property type="entry name" value="LIM1_CRP1"/>
    <property type="match status" value="1"/>
</dbReference>
<dbReference type="CDD" id="cd09403">
    <property type="entry name" value="LIM2_CRP"/>
    <property type="match status" value="1"/>
</dbReference>
<dbReference type="FunFam" id="2.10.110.10:FF:000001">
    <property type="entry name" value="Cysteine and glycine-rich protein 1"/>
    <property type="match status" value="1"/>
</dbReference>
<dbReference type="FunFam" id="2.10.110.10:FF:000124">
    <property type="entry name" value="Cysteine and glycine-rich protein 1a"/>
    <property type="match status" value="1"/>
</dbReference>
<dbReference type="Gene3D" id="2.10.110.10">
    <property type="entry name" value="Cysteine Rich Protein"/>
    <property type="match status" value="2"/>
</dbReference>
<dbReference type="InterPro" id="IPR001781">
    <property type="entry name" value="Znf_LIM"/>
</dbReference>
<dbReference type="PANTHER" id="PTHR24215:SF23">
    <property type="entry name" value="CYSTEINE AND GLYCINE-RICH PROTEIN 1"/>
    <property type="match status" value="1"/>
</dbReference>
<dbReference type="PANTHER" id="PTHR24215">
    <property type="entry name" value="RHO-GTPASE-ACTIVATING PROTEIN LRG1"/>
    <property type="match status" value="1"/>
</dbReference>
<dbReference type="Pfam" id="PF00412">
    <property type="entry name" value="LIM"/>
    <property type="match status" value="2"/>
</dbReference>
<dbReference type="SMART" id="SM00132">
    <property type="entry name" value="LIM"/>
    <property type="match status" value="2"/>
</dbReference>
<dbReference type="SUPFAM" id="SSF57716">
    <property type="entry name" value="Glucocorticoid receptor-like (DNA-binding domain)"/>
    <property type="match status" value="4"/>
</dbReference>
<dbReference type="PROSITE" id="PS00478">
    <property type="entry name" value="LIM_DOMAIN_1"/>
    <property type="match status" value="2"/>
</dbReference>
<dbReference type="PROSITE" id="PS50023">
    <property type="entry name" value="LIM_DOMAIN_2"/>
    <property type="match status" value="2"/>
</dbReference>
<comment type="function">
    <text>Could play a role in neuronal development.</text>
</comment>
<comment type="subunit">
    <text evidence="1">Interacts with ASCC1; ASCC2 and TRIP4.</text>
</comment>
<comment type="subcellular location">
    <subcellularLocation>
        <location evidence="1">Nucleus</location>
    </subcellularLocation>
</comment>
<name>CSRP1_RAT</name>